<proteinExistence type="inferred from homology"/>
<dbReference type="EC" id="2.4.99.17" evidence="1"/>
<dbReference type="EMBL" id="CP001034">
    <property type="protein sequence ID" value="ACB85365.1"/>
    <property type="molecule type" value="Genomic_DNA"/>
</dbReference>
<dbReference type="RefSeq" id="WP_012448232.1">
    <property type="nucleotide sequence ID" value="NC_010718.1"/>
</dbReference>
<dbReference type="SMR" id="B2A5L1"/>
<dbReference type="FunCoup" id="B2A5L1">
    <property type="interactions" value="329"/>
</dbReference>
<dbReference type="STRING" id="457570.Nther_1793"/>
<dbReference type="KEGG" id="nth:Nther_1793"/>
<dbReference type="eggNOG" id="COG0809">
    <property type="taxonomic scope" value="Bacteria"/>
</dbReference>
<dbReference type="HOGENOM" id="CLU_039110_1_0_9"/>
<dbReference type="InParanoid" id="B2A5L1"/>
<dbReference type="OrthoDB" id="9805933at2"/>
<dbReference type="UniPathway" id="UPA00392"/>
<dbReference type="Proteomes" id="UP000001683">
    <property type="component" value="Chromosome"/>
</dbReference>
<dbReference type="GO" id="GO:0005737">
    <property type="term" value="C:cytoplasm"/>
    <property type="evidence" value="ECO:0007669"/>
    <property type="project" value="UniProtKB-SubCell"/>
</dbReference>
<dbReference type="GO" id="GO:0051075">
    <property type="term" value="F:S-adenosylmethionine:tRNA ribosyltransferase-isomerase activity"/>
    <property type="evidence" value="ECO:0007669"/>
    <property type="project" value="UniProtKB-EC"/>
</dbReference>
<dbReference type="GO" id="GO:0008616">
    <property type="term" value="P:queuosine biosynthetic process"/>
    <property type="evidence" value="ECO:0007669"/>
    <property type="project" value="UniProtKB-UniRule"/>
</dbReference>
<dbReference type="GO" id="GO:0002099">
    <property type="term" value="P:tRNA wobble guanine modification"/>
    <property type="evidence" value="ECO:0007669"/>
    <property type="project" value="TreeGrafter"/>
</dbReference>
<dbReference type="FunFam" id="2.40.10.240:FF:000002">
    <property type="entry name" value="S-adenosylmethionine:tRNA ribosyltransferase-isomerase"/>
    <property type="match status" value="1"/>
</dbReference>
<dbReference type="FunFam" id="3.40.1780.10:FF:000001">
    <property type="entry name" value="S-adenosylmethionine:tRNA ribosyltransferase-isomerase"/>
    <property type="match status" value="1"/>
</dbReference>
<dbReference type="Gene3D" id="2.40.10.240">
    <property type="entry name" value="QueA-like"/>
    <property type="match status" value="1"/>
</dbReference>
<dbReference type="Gene3D" id="3.40.1780.10">
    <property type="entry name" value="QueA-like"/>
    <property type="match status" value="1"/>
</dbReference>
<dbReference type="HAMAP" id="MF_00113">
    <property type="entry name" value="QueA"/>
    <property type="match status" value="1"/>
</dbReference>
<dbReference type="InterPro" id="IPR003699">
    <property type="entry name" value="QueA"/>
</dbReference>
<dbReference type="InterPro" id="IPR042118">
    <property type="entry name" value="QueA_dom1"/>
</dbReference>
<dbReference type="InterPro" id="IPR042119">
    <property type="entry name" value="QueA_dom2"/>
</dbReference>
<dbReference type="InterPro" id="IPR036100">
    <property type="entry name" value="QueA_sf"/>
</dbReference>
<dbReference type="NCBIfam" id="NF001140">
    <property type="entry name" value="PRK00147.1"/>
    <property type="match status" value="1"/>
</dbReference>
<dbReference type="NCBIfam" id="TIGR00113">
    <property type="entry name" value="queA"/>
    <property type="match status" value="1"/>
</dbReference>
<dbReference type="PANTHER" id="PTHR30307">
    <property type="entry name" value="S-ADENOSYLMETHIONINE:TRNA RIBOSYLTRANSFERASE-ISOMERASE"/>
    <property type="match status" value="1"/>
</dbReference>
<dbReference type="PANTHER" id="PTHR30307:SF0">
    <property type="entry name" value="S-ADENOSYLMETHIONINE:TRNA RIBOSYLTRANSFERASE-ISOMERASE"/>
    <property type="match status" value="1"/>
</dbReference>
<dbReference type="Pfam" id="PF02547">
    <property type="entry name" value="Queuosine_synth"/>
    <property type="match status" value="1"/>
</dbReference>
<dbReference type="SUPFAM" id="SSF111337">
    <property type="entry name" value="QueA-like"/>
    <property type="match status" value="1"/>
</dbReference>
<gene>
    <name evidence="1" type="primary">queA</name>
    <name type="ordered locus">Nther_1793</name>
</gene>
<accession>B2A5L1</accession>
<sequence>MKLEEFNYELPEELIAQKPLANRSKSRLMVVSINSSDVQHNHFEKLPQYVKDGDLFVINNSRVIPARLFGNKKQTGGKLEMVLLHPLEGKDEWEVLVKPGKRAKPGNVFEFGQETLEAEILDITPEGSRRVKFYYQGNFQQVLDQLGQMPLPPYIKEELEDPERYQTVYAKESGSVAAPTAGLHFTPEIISDIKDQGGEVAELTLHVGLGTFRPVETPNIEEHEMHAEYYQLPEETAKKINQAKQRGNRVIAVGTTVVRTLETVKTDDGLVQPGKGWTDIFIYPGYEFKVVDAMLTNFHLPKSTLLMLVSAFAGKDLIMSAYQAAIEERYRFFSFGDAMFIKN</sequence>
<feature type="chain" id="PRO_1000094792" description="S-adenosylmethionine:tRNA ribosyltransferase-isomerase">
    <location>
        <begin position="1"/>
        <end position="343"/>
    </location>
</feature>
<organism>
    <name type="scientific">Natranaerobius thermophilus (strain ATCC BAA-1301 / DSM 18059 / JW/NM-WN-LF)</name>
    <dbReference type="NCBI Taxonomy" id="457570"/>
    <lineage>
        <taxon>Bacteria</taxon>
        <taxon>Bacillati</taxon>
        <taxon>Bacillota</taxon>
        <taxon>Clostridia</taxon>
        <taxon>Natranaerobiales</taxon>
        <taxon>Natranaerobiaceae</taxon>
        <taxon>Natranaerobius</taxon>
    </lineage>
</organism>
<reference key="1">
    <citation type="submission" date="2008-04" db="EMBL/GenBank/DDBJ databases">
        <title>Complete sequence of chromosome of Natranaerobius thermophilus JW/NM-WN-LF.</title>
        <authorList>
            <consortium name="US DOE Joint Genome Institute"/>
            <person name="Copeland A."/>
            <person name="Lucas S."/>
            <person name="Lapidus A."/>
            <person name="Glavina del Rio T."/>
            <person name="Dalin E."/>
            <person name="Tice H."/>
            <person name="Bruce D."/>
            <person name="Goodwin L."/>
            <person name="Pitluck S."/>
            <person name="Chertkov O."/>
            <person name="Brettin T."/>
            <person name="Detter J.C."/>
            <person name="Han C."/>
            <person name="Kuske C.R."/>
            <person name="Schmutz J."/>
            <person name="Larimer F."/>
            <person name="Land M."/>
            <person name="Hauser L."/>
            <person name="Kyrpides N."/>
            <person name="Lykidis A."/>
            <person name="Mesbah N.M."/>
            <person name="Wiegel J."/>
        </authorList>
    </citation>
    <scope>NUCLEOTIDE SEQUENCE [LARGE SCALE GENOMIC DNA]</scope>
    <source>
        <strain>ATCC BAA-1301 / DSM 18059 / JW/NM-WN-LF</strain>
    </source>
</reference>
<evidence type="ECO:0000255" key="1">
    <source>
        <dbReference type="HAMAP-Rule" id="MF_00113"/>
    </source>
</evidence>
<protein>
    <recommendedName>
        <fullName evidence="1">S-adenosylmethionine:tRNA ribosyltransferase-isomerase</fullName>
        <ecNumber evidence="1">2.4.99.17</ecNumber>
    </recommendedName>
    <alternativeName>
        <fullName evidence="1">Queuosine biosynthesis protein QueA</fullName>
    </alternativeName>
</protein>
<name>QUEA_NATTJ</name>
<comment type="function">
    <text evidence="1">Transfers and isomerizes the ribose moiety from AdoMet to the 7-aminomethyl group of 7-deazaguanine (preQ1-tRNA) to give epoxyqueuosine (oQ-tRNA).</text>
</comment>
<comment type="catalytic activity">
    <reaction evidence="1">
        <text>7-aminomethyl-7-carbaguanosine(34) in tRNA + S-adenosyl-L-methionine = epoxyqueuosine(34) in tRNA + adenine + L-methionine + 2 H(+)</text>
        <dbReference type="Rhea" id="RHEA:32155"/>
        <dbReference type="Rhea" id="RHEA-COMP:10342"/>
        <dbReference type="Rhea" id="RHEA-COMP:18582"/>
        <dbReference type="ChEBI" id="CHEBI:15378"/>
        <dbReference type="ChEBI" id="CHEBI:16708"/>
        <dbReference type="ChEBI" id="CHEBI:57844"/>
        <dbReference type="ChEBI" id="CHEBI:59789"/>
        <dbReference type="ChEBI" id="CHEBI:82833"/>
        <dbReference type="ChEBI" id="CHEBI:194443"/>
        <dbReference type="EC" id="2.4.99.17"/>
    </reaction>
</comment>
<comment type="pathway">
    <text evidence="1">tRNA modification; tRNA-queuosine biosynthesis.</text>
</comment>
<comment type="subunit">
    <text evidence="1">Monomer.</text>
</comment>
<comment type="subcellular location">
    <subcellularLocation>
        <location evidence="1">Cytoplasm</location>
    </subcellularLocation>
</comment>
<comment type="similarity">
    <text evidence="1">Belongs to the QueA family.</text>
</comment>
<keyword id="KW-0963">Cytoplasm</keyword>
<keyword id="KW-0671">Queuosine biosynthesis</keyword>
<keyword id="KW-1185">Reference proteome</keyword>
<keyword id="KW-0949">S-adenosyl-L-methionine</keyword>
<keyword id="KW-0808">Transferase</keyword>